<accession>O26285</accession>
<feature type="chain" id="PRO_0000112698" description="Acetylglutamate kinase">
    <location>
        <begin position="1"/>
        <end position="293"/>
    </location>
</feature>
<feature type="binding site" evidence="1">
    <location>
        <begin position="60"/>
        <end position="61"/>
    </location>
    <ligand>
        <name>substrate</name>
    </ligand>
</feature>
<feature type="binding site" evidence="1">
    <location>
        <position position="82"/>
    </location>
    <ligand>
        <name>substrate</name>
    </ligand>
</feature>
<feature type="binding site" evidence="1">
    <location>
        <position position="188"/>
    </location>
    <ligand>
        <name>substrate</name>
    </ligand>
</feature>
<feature type="site" description="Transition state stabilizer" evidence="1">
    <location>
        <position position="25"/>
    </location>
</feature>
<feature type="site" description="Transition state stabilizer" evidence="1">
    <location>
        <position position="251"/>
    </location>
</feature>
<evidence type="ECO:0000255" key="1">
    <source>
        <dbReference type="HAMAP-Rule" id="MF_00082"/>
    </source>
</evidence>
<comment type="function">
    <text evidence="1">Catalyzes the ATP-dependent phosphorylation of N-acetyl-L-glutamate.</text>
</comment>
<comment type="catalytic activity">
    <reaction evidence="1">
        <text>N-acetyl-L-glutamate + ATP = N-acetyl-L-glutamyl 5-phosphate + ADP</text>
        <dbReference type="Rhea" id="RHEA:14629"/>
        <dbReference type="ChEBI" id="CHEBI:30616"/>
        <dbReference type="ChEBI" id="CHEBI:44337"/>
        <dbReference type="ChEBI" id="CHEBI:57936"/>
        <dbReference type="ChEBI" id="CHEBI:456216"/>
        <dbReference type="EC" id="2.7.2.8"/>
    </reaction>
</comment>
<comment type="pathway">
    <text evidence="1">Amino-acid biosynthesis; L-arginine biosynthesis; N(2)-acetyl-L-ornithine from L-glutamate: step 2/4.</text>
</comment>
<comment type="subcellular location">
    <subcellularLocation>
        <location evidence="1">Cytoplasm</location>
    </subcellularLocation>
</comment>
<comment type="similarity">
    <text evidence="1">Belongs to the acetylglutamate kinase family. ArgB subfamily.</text>
</comment>
<sequence>MKTVNILVEALPYIKKFHRKKIMIKYGGHAMIDEAAMDSTARDTVLLKYVGMEPVVVHGGGPEISRAMNKMGKEPKFIEGLRVTDEETMEIVKMVLVGKINTSIVSKICYHGGRAIGLSGKDSNLLLARKRAPHVVRDDETGERREIDLGLVGEIESVDPGIINMLTDNNYIPVISPIGVDRDANTLNLNADTVAGEVAAGIGAEKLIVLTDVPGILEDPSDPDTLIRRISVDELSDLVKSGIVEGGMLPKTLTCIQAINDGVSSAHIIDGRVEHSLLLEIFTKKGIGTMITE</sequence>
<dbReference type="EC" id="2.7.2.8" evidence="1"/>
<dbReference type="EMBL" id="AE000666">
    <property type="protein sequence ID" value="AAB84689.1"/>
    <property type="molecule type" value="Genomic_DNA"/>
</dbReference>
<dbReference type="PIR" id="F69111">
    <property type="entry name" value="F69111"/>
</dbReference>
<dbReference type="RefSeq" id="WP_010875822.1">
    <property type="nucleotide sequence ID" value="NC_000916.1"/>
</dbReference>
<dbReference type="SMR" id="O26285"/>
<dbReference type="FunCoup" id="O26285">
    <property type="interactions" value="114"/>
</dbReference>
<dbReference type="STRING" id="187420.MTH_183"/>
<dbReference type="PaxDb" id="187420-MTH_183"/>
<dbReference type="EnsemblBacteria" id="AAB84689">
    <property type="protein sequence ID" value="AAB84689"/>
    <property type="gene ID" value="MTH_183"/>
</dbReference>
<dbReference type="GeneID" id="82296662"/>
<dbReference type="KEGG" id="mth:MTH_183"/>
<dbReference type="PATRIC" id="fig|187420.15.peg.156"/>
<dbReference type="HOGENOM" id="CLU_053680_0_0_2"/>
<dbReference type="InParanoid" id="O26285"/>
<dbReference type="UniPathway" id="UPA00068">
    <property type="reaction ID" value="UER00107"/>
</dbReference>
<dbReference type="Proteomes" id="UP000005223">
    <property type="component" value="Chromosome"/>
</dbReference>
<dbReference type="GO" id="GO:0005737">
    <property type="term" value="C:cytoplasm"/>
    <property type="evidence" value="ECO:0007669"/>
    <property type="project" value="UniProtKB-SubCell"/>
</dbReference>
<dbReference type="GO" id="GO:0003991">
    <property type="term" value="F:acetylglutamate kinase activity"/>
    <property type="evidence" value="ECO:0007669"/>
    <property type="project" value="UniProtKB-UniRule"/>
</dbReference>
<dbReference type="GO" id="GO:0005524">
    <property type="term" value="F:ATP binding"/>
    <property type="evidence" value="ECO:0007669"/>
    <property type="project" value="UniProtKB-UniRule"/>
</dbReference>
<dbReference type="GO" id="GO:0042450">
    <property type="term" value="P:arginine biosynthetic process via ornithine"/>
    <property type="evidence" value="ECO:0007669"/>
    <property type="project" value="UniProtKB-UniRule"/>
</dbReference>
<dbReference type="GO" id="GO:0006526">
    <property type="term" value="P:L-arginine biosynthetic process"/>
    <property type="evidence" value="ECO:0007669"/>
    <property type="project" value="UniProtKB-UniPathway"/>
</dbReference>
<dbReference type="CDD" id="cd04250">
    <property type="entry name" value="AAK_NAGK-C"/>
    <property type="match status" value="1"/>
</dbReference>
<dbReference type="FunFam" id="3.40.1160.10:FF:000004">
    <property type="entry name" value="Acetylglutamate kinase"/>
    <property type="match status" value="1"/>
</dbReference>
<dbReference type="Gene3D" id="3.40.1160.10">
    <property type="entry name" value="Acetylglutamate kinase-like"/>
    <property type="match status" value="1"/>
</dbReference>
<dbReference type="HAMAP" id="MF_00082">
    <property type="entry name" value="ArgB"/>
    <property type="match status" value="1"/>
</dbReference>
<dbReference type="InterPro" id="IPR036393">
    <property type="entry name" value="AceGlu_kinase-like_sf"/>
</dbReference>
<dbReference type="InterPro" id="IPR004662">
    <property type="entry name" value="AcgluKinase_fam"/>
</dbReference>
<dbReference type="InterPro" id="IPR037528">
    <property type="entry name" value="ArgB"/>
</dbReference>
<dbReference type="InterPro" id="IPR001048">
    <property type="entry name" value="Asp/Glu/Uridylate_kinase"/>
</dbReference>
<dbReference type="InterPro" id="IPR001057">
    <property type="entry name" value="Glu/AcGlu_kinase"/>
</dbReference>
<dbReference type="InterPro" id="IPR041727">
    <property type="entry name" value="NAGK-C"/>
</dbReference>
<dbReference type="NCBIfam" id="TIGR00761">
    <property type="entry name" value="argB"/>
    <property type="match status" value="1"/>
</dbReference>
<dbReference type="PANTHER" id="PTHR23342">
    <property type="entry name" value="N-ACETYLGLUTAMATE SYNTHASE"/>
    <property type="match status" value="1"/>
</dbReference>
<dbReference type="PANTHER" id="PTHR23342:SF0">
    <property type="entry name" value="N-ACETYLGLUTAMATE SYNTHASE, MITOCHONDRIAL"/>
    <property type="match status" value="1"/>
</dbReference>
<dbReference type="Pfam" id="PF00696">
    <property type="entry name" value="AA_kinase"/>
    <property type="match status" value="1"/>
</dbReference>
<dbReference type="PIRSF" id="PIRSF000728">
    <property type="entry name" value="NAGK"/>
    <property type="match status" value="1"/>
</dbReference>
<dbReference type="PRINTS" id="PR00474">
    <property type="entry name" value="GLU5KINASE"/>
</dbReference>
<dbReference type="SUPFAM" id="SSF53633">
    <property type="entry name" value="Carbamate kinase-like"/>
    <property type="match status" value="1"/>
</dbReference>
<keyword id="KW-0028">Amino-acid biosynthesis</keyword>
<keyword id="KW-0055">Arginine biosynthesis</keyword>
<keyword id="KW-0067">ATP-binding</keyword>
<keyword id="KW-0963">Cytoplasm</keyword>
<keyword id="KW-0418">Kinase</keyword>
<keyword id="KW-0547">Nucleotide-binding</keyword>
<keyword id="KW-1185">Reference proteome</keyword>
<keyword id="KW-0808">Transferase</keyword>
<protein>
    <recommendedName>
        <fullName evidence="1">Acetylglutamate kinase</fullName>
        <ecNumber evidence="1">2.7.2.8</ecNumber>
    </recommendedName>
    <alternativeName>
        <fullName evidence="1">N-acetyl-L-glutamate 5-phosphotransferase</fullName>
    </alternativeName>
    <alternativeName>
        <fullName evidence="1">NAG kinase</fullName>
        <shortName evidence="1">NAGK</shortName>
    </alternativeName>
</protein>
<name>ARGB_METTH</name>
<gene>
    <name evidence="1" type="primary">argB</name>
    <name type="ordered locus">MTH_183</name>
</gene>
<reference key="1">
    <citation type="journal article" date="1997" name="J. Bacteriol.">
        <title>Complete genome sequence of Methanobacterium thermoautotrophicum deltaH: functional analysis and comparative genomics.</title>
        <authorList>
            <person name="Smith D.R."/>
            <person name="Doucette-Stamm L.A."/>
            <person name="Deloughery C."/>
            <person name="Lee H.-M."/>
            <person name="Dubois J."/>
            <person name="Aldredge T."/>
            <person name="Bashirzadeh R."/>
            <person name="Blakely D."/>
            <person name="Cook R."/>
            <person name="Gilbert K."/>
            <person name="Harrison D."/>
            <person name="Hoang L."/>
            <person name="Keagle P."/>
            <person name="Lumm W."/>
            <person name="Pothier B."/>
            <person name="Qiu D."/>
            <person name="Spadafora R."/>
            <person name="Vicare R."/>
            <person name="Wang Y."/>
            <person name="Wierzbowski J."/>
            <person name="Gibson R."/>
            <person name="Jiwani N."/>
            <person name="Caruso A."/>
            <person name="Bush D."/>
            <person name="Safer H."/>
            <person name="Patwell D."/>
            <person name="Prabhakar S."/>
            <person name="McDougall S."/>
            <person name="Shimer G."/>
            <person name="Goyal A."/>
            <person name="Pietrovski S."/>
            <person name="Church G.M."/>
            <person name="Daniels C.J."/>
            <person name="Mao J.-I."/>
            <person name="Rice P."/>
            <person name="Noelling J."/>
            <person name="Reeve J.N."/>
        </authorList>
    </citation>
    <scope>NUCLEOTIDE SEQUENCE [LARGE SCALE GENOMIC DNA]</scope>
    <source>
        <strain>ATCC 29096 / DSM 1053 / JCM 10044 / NBRC 100330 / Delta H</strain>
    </source>
</reference>
<proteinExistence type="inferred from homology"/>
<organism>
    <name type="scientific">Methanothermobacter thermautotrophicus (strain ATCC 29096 / DSM 1053 / JCM 10044 / NBRC 100330 / Delta H)</name>
    <name type="common">Methanobacterium thermoautotrophicum</name>
    <dbReference type="NCBI Taxonomy" id="187420"/>
    <lineage>
        <taxon>Archaea</taxon>
        <taxon>Methanobacteriati</taxon>
        <taxon>Methanobacteriota</taxon>
        <taxon>Methanomada group</taxon>
        <taxon>Methanobacteria</taxon>
        <taxon>Methanobacteriales</taxon>
        <taxon>Methanobacteriaceae</taxon>
        <taxon>Methanothermobacter</taxon>
    </lineage>
</organism>